<accession>B7MF86</accession>
<dbReference type="EMBL" id="CU928161">
    <property type="protein sequence ID" value="CAR03602.2"/>
    <property type="status" value="ALT_INIT"/>
    <property type="molecule type" value="Genomic_DNA"/>
</dbReference>
<dbReference type="RefSeq" id="WP_001136827.1">
    <property type="nucleotide sequence ID" value="NC_011742.1"/>
</dbReference>
<dbReference type="SMR" id="B7MF86"/>
<dbReference type="GeneID" id="93775010"/>
<dbReference type="KEGG" id="ecz:ECS88_2320"/>
<dbReference type="HOGENOM" id="CLU_074944_2_0_6"/>
<dbReference type="Proteomes" id="UP000000747">
    <property type="component" value="Chromosome"/>
</dbReference>
<dbReference type="GO" id="GO:0005829">
    <property type="term" value="C:cytosol"/>
    <property type="evidence" value="ECO:0007669"/>
    <property type="project" value="UniProtKB-ARBA"/>
</dbReference>
<dbReference type="GO" id="GO:0003746">
    <property type="term" value="F:translation elongation factor activity"/>
    <property type="evidence" value="ECO:0007669"/>
    <property type="project" value="UniProtKB-UniRule"/>
</dbReference>
<dbReference type="GO" id="GO:0043043">
    <property type="term" value="P:peptide biosynthetic process"/>
    <property type="evidence" value="ECO:0007669"/>
    <property type="project" value="InterPro"/>
</dbReference>
<dbReference type="CDD" id="cd04470">
    <property type="entry name" value="S1_EF-P_repeat_1"/>
    <property type="match status" value="1"/>
</dbReference>
<dbReference type="CDD" id="cd05794">
    <property type="entry name" value="S1_EF-P_repeat_2"/>
    <property type="match status" value="1"/>
</dbReference>
<dbReference type="FunFam" id="2.40.50.140:FF:000004">
    <property type="entry name" value="Elongation factor P"/>
    <property type="match status" value="1"/>
</dbReference>
<dbReference type="FunFam" id="2.30.30.30:FF:000011">
    <property type="entry name" value="Elongation factor P-like protein"/>
    <property type="match status" value="1"/>
</dbReference>
<dbReference type="FunFam" id="2.40.50.140:FF:000053">
    <property type="entry name" value="Elongation factor P-like protein"/>
    <property type="match status" value="1"/>
</dbReference>
<dbReference type="Gene3D" id="2.30.30.30">
    <property type="match status" value="1"/>
</dbReference>
<dbReference type="Gene3D" id="2.40.50.140">
    <property type="entry name" value="Nucleic acid-binding proteins"/>
    <property type="match status" value="2"/>
</dbReference>
<dbReference type="HAMAP" id="MF_00646">
    <property type="entry name" value="EFP"/>
    <property type="match status" value="1"/>
</dbReference>
<dbReference type="InterPro" id="IPR015365">
    <property type="entry name" value="Elong-fact-P_C"/>
</dbReference>
<dbReference type="InterPro" id="IPR012340">
    <property type="entry name" value="NA-bd_OB-fold"/>
</dbReference>
<dbReference type="InterPro" id="IPR014722">
    <property type="entry name" value="Rib_uL2_dom2"/>
</dbReference>
<dbReference type="InterPro" id="IPR020599">
    <property type="entry name" value="Transl_elong_fac_P/YeiP"/>
</dbReference>
<dbReference type="InterPro" id="IPR013185">
    <property type="entry name" value="Transl_elong_KOW-like"/>
</dbReference>
<dbReference type="InterPro" id="IPR011897">
    <property type="entry name" value="Transl_elong_p-like_YeiP"/>
</dbReference>
<dbReference type="InterPro" id="IPR001059">
    <property type="entry name" value="Transl_elong_P/YeiP_cen"/>
</dbReference>
<dbReference type="InterPro" id="IPR013852">
    <property type="entry name" value="Transl_elong_P/YeiP_CS"/>
</dbReference>
<dbReference type="InterPro" id="IPR008991">
    <property type="entry name" value="Translation_prot_SH3-like_sf"/>
</dbReference>
<dbReference type="NCBIfam" id="NF001810">
    <property type="entry name" value="PRK00529.1"/>
    <property type="match status" value="1"/>
</dbReference>
<dbReference type="NCBIfam" id="NF003392">
    <property type="entry name" value="PRK04542.1"/>
    <property type="match status" value="1"/>
</dbReference>
<dbReference type="NCBIfam" id="TIGR02178">
    <property type="entry name" value="yeiP"/>
    <property type="match status" value="1"/>
</dbReference>
<dbReference type="PANTHER" id="PTHR30053">
    <property type="entry name" value="ELONGATION FACTOR P"/>
    <property type="match status" value="1"/>
</dbReference>
<dbReference type="PANTHER" id="PTHR30053:SF14">
    <property type="entry name" value="TRANSLATION ELONGATION FACTOR KOW-LIKE DOMAIN-CONTAINING PROTEIN"/>
    <property type="match status" value="1"/>
</dbReference>
<dbReference type="Pfam" id="PF01132">
    <property type="entry name" value="EFP"/>
    <property type="match status" value="1"/>
</dbReference>
<dbReference type="Pfam" id="PF08207">
    <property type="entry name" value="EFP_N"/>
    <property type="match status" value="1"/>
</dbReference>
<dbReference type="Pfam" id="PF09285">
    <property type="entry name" value="Elong-fact-P_C"/>
    <property type="match status" value="1"/>
</dbReference>
<dbReference type="PIRSF" id="PIRSF005901">
    <property type="entry name" value="EF-P"/>
    <property type="match status" value="1"/>
</dbReference>
<dbReference type="SMART" id="SM01185">
    <property type="entry name" value="EFP"/>
    <property type="match status" value="1"/>
</dbReference>
<dbReference type="SMART" id="SM00841">
    <property type="entry name" value="Elong-fact-P_C"/>
    <property type="match status" value="1"/>
</dbReference>
<dbReference type="SUPFAM" id="SSF50249">
    <property type="entry name" value="Nucleic acid-binding proteins"/>
    <property type="match status" value="2"/>
</dbReference>
<dbReference type="SUPFAM" id="SSF50104">
    <property type="entry name" value="Translation proteins SH3-like domain"/>
    <property type="match status" value="1"/>
</dbReference>
<dbReference type="PROSITE" id="PS01275">
    <property type="entry name" value="EFP"/>
    <property type="match status" value="1"/>
</dbReference>
<keyword id="KW-1185">Reference proteome</keyword>
<feature type="chain" id="PRO_0000384914" description="Elongation factor P-like protein">
    <location>
        <begin position="1"/>
        <end position="190"/>
    </location>
</feature>
<comment type="similarity">
    <text evidence="1">Belongs to the elongation factor P family.</text>
</comment>
<comment type="sequence caution" evidence="2">
    <conflict type="erroneous initiation">
        <sequence resource="EMBL-CDS" id="CAR03602"/>
    </conflict>
</comment>
<protein>
    <recommendedName>
        <fullName evidence="1">Elongation factor P-like protein</fullName>
    </recommendedName>
</protein>
<proteinExistence type="inferred from homology"/>
<gene>
    <name evidence="1" type="primary">yeiP</name>
    <name type="ordered locus">ECS88_2320</name>
</gene>
<sequence>MPRANEIKKGMVLNYNGKLLLVKDIDIQSPTARGAATLYKMRFSDVRTGLKVEERFKGDDIVDTVTLTRRYVDFSYVDGNEYVFMDKEDYTPYTFTKDQIEEELLFMPEGGMPDMQVLTWDGQLLALELPQTVDLEIVETAPGIKGASASARNKPATLSTGLVIQVPEYLSPGEKIRIHIEERRYMGRAD</sequence>
<evidence type="ECO:0000255" key="1">
    <source>
        <dbReference type="HAMAP-Rule" id="MF_00646"/>
    </source>
</evidence>
<evidence type="ECO:0000305" key="2"/>
<name>EFPL_ECO45</name>
<organism>
    <name type="scientific">Escherichia coli O45:K1 (strain S88 / ExPEC)</name>
    <dbReference type="NCBI Taxonomy" id="585035"/>
    <lineage>
        <taxon>Bacteria</taxon>
        <taxon>Pseudomonadati</taxon>
        <taxon>Pseudomonadota</taxon>
        <taxon>Gammaproteobacteria</taxon>
        <taxon>Enterobacterales</taxon>
        <taxon>Enterobacteriaceae</taxon>
        <taxon>Escherichia</taxon>
    </lineage>
</organism>
<reference key="1">
    <citation type="journal article" date="2009" name="PLoS Genet.">
        <title>Organised genome dynamics in the Escherichia coli species results in highly diverse adaptive paths.</title>
        <authorList>
            <person name="Touchon M."/>
            <person name="Hoede C."/>
            <person name="Tenaillon O."/>
            <person name="Barbe V."/>
            <person name="Baeriswyl S."/>
            <person name="Bidet P."/>
            <person name="Bingen E."/>
            <person name="Bonacorsi S."/>
            <person name="Bouchier C."/>
            <person name="Bouvet O."/>
            <person name="Calteau A."/>
            <person name="Chiapello H."/>
            <person name="Clermont O."/>
            <person name="Cruveiller S."/>
            <person name="Danchin A."/>
            <person name="Diard M."/>
            <person name="Dossat C."/>
            <person name="Karoui M.E."/>
            <person name="Frapy E."/>
            <person name="Garry L."/>
            <person name="Ghigo J.M."/>
            <person name="Gilles A.M."/>
            <person name="Johnson J."/>
            <person name="Le Bouguenec C."/>
            <person name="Lescat M."/>
            <person name="Mangenot S."/>
            <person name="Martinez-Jehanne V."/>
            <person name="Matic I."/>
            <person name="Nassif X."/>
            <person name="Oztas S."/>
            <person name="Petit M.A."/>
            <person name="Pichon C."/>
            <person name="Rouy Z."/>
            <person name="Ruf C.S."/>
            <person name="Schneider D."/>
            <person name="Tourret J."/>
            <person name="Vacherie B."/>
            <person name="Vallenet D."/>
            <person name="Medigue C."/>
            <person name="Rocha E.P.C."/>
            <person name="Denamur E."/>
        </authorList>
    </citation>
    <scope>NUCLEOTIDE SEQUENCE [LARGE SCALE GENOMIC DNA]</scope>
    <source>
        <strain>S88 / ExPEC</strain>
    </source>
</reference>